<evidence type="ECO:0000255" key="1">
    <source>
        <dbReference type="HAMAP-Rule" id="MF_01396"/>
    </source>
</evidence>
<sequence>MNPIVSAASVVASGLSVGLAAIGPGIGQGTAAAQAVEGIARQPEAEGRIRGTLLLSLAFMESLTIYGLVVALALLFANPFTA</sequence>
<protein>
    <recommendedName>
        <fullName evidence="1">ATP synthase subunit c, chloroplastic</fullName>
    </recommendedName>
    <alternativeName>
        <fullName evidence="1">ATP synthase F(0) sector subunit c</fullName>
    </alternativeName>
    <alternativeName>
        <fullName evidence="1">ATPase subunit III</fullName>
    </alternativeName>
    <alternativeName>
        <fullName evidence="1">F-type ATPase subunit c</fullName>
        <shortName evidence="1">F-ATPase subunit c</shortName>
    </alternativeName>
    <alternativeName>
        <fullName evidence="1">Lipid-binding protein</fullName>
    </alternativeName>
</protein>
<feature type="chain" id="PRO_0000362971" description="ATP synthase subunit c, chloroplastic">
    <location>
        <begin position="1"/>
        <end position="82"/>
    </location>
</feature>
<feature type="transmembrane region" description="Helical" evidence="1">
    <location>
        <begin position="7"/>
        <end position="27"/>
    </location>
</feature>
<feature type="transmembrane region" description="Helical" evidence="1">
    <location>
        <begin position="57"/>
        <end position="77"/>
    </location>
</feature>
<feature type="site" description="Reversibly protonated during proton transport" evidence="1">
    <location>
        <position position="61"/>
    </location>
</feature>
<gene>
    <name evidence="1" type="primary">atpH</name>
</gene>
<dbReference type="EMBL" id="EF508371">
    <property type="protein sequence ID" value="ABO70817.1"/>
    <property type="molecule type" value="Genomic_DNA"/>
</dbReference>
<dbReference type="RefSeq" id="YP_001293547.1">
    <property type="nucleotide sequence ID" value="NC_009573.1"/>
</dbReference>
<dbReference type="SMR" id="A6MVW8"/>
<dbReference type="GeneID" id="5228642"/>
<dbReference type="GO" id="GO:0009535">
    <property type="term" value="C:chloroplast thylakoid membrane"/>
    <property type="evidence" value="ECO:0007669"/>
    <property type="project" value="UniProtKB-SubCell"/>
</dbReference>
<dbReference type="GO" id="GO:0045259">
    <property type="term" value="C:proton-transporting ATP synthase complex"/>
    <property type="evidence" value="ECO:0007669"/>
    <property type="project" value="UniProtKB-KW"/>
</dbReference>
<dbReference type="GO" id="GO:0033177">
    <property type="term" value="C:proton-transporting two-sector ATPase complex, proton-transporting domain"/>
    <property type="evidence" value="ECO:0007669"/>
    <property type="project" value="InterPro"/>
</dbReference>
<dbReference type="GO" id="GO:0008289">
    <property type="term" value="F:lipid binding"/>
    <property type="evidence" value="ECO:0007669"/>
    <property type="project" value="UniProtKB-KW"/>
</dbReference>
<dbReference type="GO" id="GO:0046933">
    <property type="term" value="F:proton-transporting ATP synthase activity, rotational mechanism"/>
    <property type="evidence" value="ECO:0007669"/>
    <property type="project" value="UniProtKB-UniRule"/>
</dbReference>
<dbReference type="CDD" id="cd18183">
    <property type="entry name" value="ATP-synt_Fo_c_ATPH"/>
    <property type="match status" value="1"/>
</dbReference>
<dbReference type="FunFam" id="1.20.20.10:FF:000001">
    <property type="entry name" value="ATP synthase subunit c, chloroplastic"/>
    <property type="match status" value="1"/>
</dbReference>
<dbReference type="Gene3D" id="1.20.20.10">
    <property type="entry name" value="F1F0 ATP synthase subunit C"/>
    <property type="match status" value="1"/>
</dbReference>
<dbReference type="HAMAP" id="MF_01396">
    <property type="entry name" value="ATP_synth_c_bact"/>
    <property type="match status" value="1"/>
</dbReference>
<dbReference type="InterPro" id="IPR005953">
    <property type="entry name" value="ATP_synth_csu_bac/chlpt"/>
</dbReference>
<dbReference type="InterPro" id="IPR000454">
    <property type="entry name" value="ATP_synth_F0_csu"/>
</dbReference>
<dbReference type="InterPro" id="IPR020537">
    <property type="entry name" value="ATP_synth_F0_csu_DDCD_BS"/>
</dbReference>
<dbReference type="InterPro" id="IPR038662">
    <property type="entry name" value="ATP_synth_F0_csu_sf"/>
</dbReference>
<dbReference type="InterPro" id="IPR002379">
    <property type="entry name" value="ATPase_proteolipid_c-like_dom"/>
</dbReference>
<dbReference type="InterPro" id="IPR035921">
    <property type="entry name" value="F/V-ATP_Csub_sf"/>
</dbReference>
<dbReference type="NCBIfam" id="TIGR01260">
    <property type="entry name" value="ATP_synt_c"/>
    <property type="match status" value="1"/>
</dbReference>
<dbReference type="NCBIfam" id="NF005608">
    <property type="entry name" value="PRK07354.1"/>
    <property type="match status" value="1"/>
</dbReference>
<dbReference type="PANTHER" id="PTHR10031">
    <property type="entry name" value="ATP SYNTHASE LIPID-BINDING PROTEIN, MITOCHONDRIAL"/>
    <property type="match status" value="1"/>
</dbReference>
<dbReference type="PANTHER" id="PTHR10031:SF0">
    <property type="entry name" value="ATPASE PROTEIN 9"/>
    <property type="match status" value="1"/>
</dbReference>
<dbReference type="Pfam" id="PF00137">
    <property type="entry name" value="ATP-synt_C"/>
    <property type="match status" value="1"/>
</dbReference>
<dbReference type="PRINTS" id="PR00124">
    <property type="entry name" value="ATPASEC"/>
</dbReference>
<dbReference type="SUPFAM" id="SSF81333">
    <property type="entry name" value="F1F0 ATP synthase subunit C"/>
    <property type="match status" value="1"/>
</dbReference>
<dbReference type="PROSITE" id="PS00605">
    <property type="entry name" value="ATPASE_C"/>
    <property type="match status" value="1"/>
</dbReference>
<comment type="function">
    <text evidence="1">F(1)F(0) ATP synthase produces ATP from ADP in the presence of a proton or sodium gradient. F-type ATPases consist of two structural domains, F(1) containing the extramembraneous catalytic core and F(0) containing the membrane proton channel, linked together by a central stalk and a peripheral stalk. During catalysis, ATP synthesis in the catalytic domain of F(1) is coupled via a rotary mechanism of the central stalk subunits to proton translocation.</text>
</comment>
<comment type="function">
    <text evidence="1">Key component of the F(0) channel; it plays a direct role in translocation across the membrane. A homomeric c-ring of between 10-14 subunits forms the central stalk rotor element with the F(1) delta and epsilon subunits.</text>
</comment>
<comment type="subunit">
    <text evidence="1">F-type ATPases have 2 components, F(1) - the catalytic core - and F(0) - the membrane proton channel. F(1) has five subunits: alpha(3), beta(3), gamma(1), delta(1), epsilon(1). F(0) has four main subunits: a(1), b(1), b'(1) and c(10-14). The alpha and beta chains form an alternating ring which encloses part of the gamma chain. F(1) is attached to F(0) by a central stalk formed by the gamma and epsilon chains, while a peripheral stalk is formed by the delta, b and b' chains.</text>
</comment>
<comment type="subcellular location">
    <subcellularLocation>
        <location evidence="1">Plastid</location>
        <location evidence="1">Chloroplast thylakoid membrane</location>
        <topology evidence="1">Multi-pass membrane protein</topology>
    </subcellularLocation>
</comment>
<comment type="miscellaneous">
    <text>In plastids the F-type ATPase is also known as CF(1)CF(0).</text>
</comment>
<comment type="similarity">
    <text evidence="1">Belongs to the ATPase C chain family.</text>
</comment>
<keyword id="KW-0066">ATP synthesis</keyword>
<keyword id="KW-0138">CF(0)</keyword>
<keyword id="KW-0150">Chloroplast</keyword>
<keyword id="KW-0375">Hydrogen ion transport</keyword>
<keyword id="KW-0406">Ion transport</keyword>
<keyword id="KW-0446">Lipid-binding</keyword>
<keyword id="KW-0472">Membrane</keyword>
<keyword id="KW-0934">Plastid</keyword>
<keyword id="KW-0793">Thylakoid</keyword>
<keyword id="KW-0812">Transmembrane</keyword>
<keyword id="KW-1133">Transmembrane helix</keyword>
<keyword id="KW-0813">Transport</keyword>
<proteinExistence type="inferred from homology"/>
<geneLocation type="chloroplast"/>
<name>ATPH_RHDSA</name>
<organism>
    <name type="scientific">Rhodomonas salina</name>
    <name type="common">Cryptomonas salina</name>
    <dbReference type="NCBI Taxonomy" id="52970"/>
    <lineage>
        <taxon>Eukaryota</taxon>
        <taxon>Cryptophyceae</taxon>
        <taxon>Pyrenomonadales</taxon>
        <taxon>Pyrenomonadaceae</taxon>
        <taxon>Rhodomonas</taxon>
    </lineage>
</organism>
<accession>A6MVW8</accession>
<reference key="1">
    <citation type="journal article" date="2007" name="Mol. Biol. Evol.">
        <title>Plastid genome sequence of the cryptophyte alga Rhodomonas salina CCMP1319: lateral transfer of putative DNA replication machinery and a test of chromist plastid phylogeny.</title>
        <authorList>
            <person name="Khan H."/>
            <person name="Parks N."/>
            <person name="Kozera C."/>
            <person name="Curtis B.A."/>
            <person name="Parsons B.J."/>
            <person name="Bowman S."/>
            <person name="Archibald J.M."/>
        </authorList>
    </citation>
    <scope>NUCLEOTIDE SEQUENCE [LARGE SCALE GENOMIC DNA]</scope>
    <source>
        <strain>CCMP1319 / NEPCC76 / CS-174</strain>
    </source>
</reference>